<reference key="1">
    <citation type="journal article" date="2004" name="Nature">
        <title>The DNA sequence and analysis of human chromosome 13.</title>
        <authorList>
            <person name="Dunham A."/>
            <person name="Matthews L.H."/>
            <person name="Burton J."/>
            <person name="Ashurst J.L."/>
            <person name="Howe K.L."/>
            <person name="Ashcroft K.J."/>
            <person name="Beare D.M."/>
            <person name="Burford D.C."/>
            <person name="Hunt S.E."/>
            <person name="Griffiths-Jones S."/>
            <person name="Jones M.C."/>
            <person name="Keenan S.J."/>
            <person name="Oliver K."/>
            <person name="Scott C.E."/>
            <person name="Ainscough R."/>
            <person name="Almeida J.P."/>
            <person name="Ambrose K.D."/>
            <person name="Andrews D.T."/>
            <person name="Ashwell R.I.S."/>
            <person name="Babbage A.K."/>
            <person name="Bagguley C.L."/>
            <person name="Bailey J."/>
            <person name="Bannerjee R."/>
            <person name="Barlow K.F."/>
            <person name="Bates K."/>
            <person name="Beasley H."/>
            <person name="Bird C.P."/>
            <person name="Bray-Allen S."/>
            <person name="Brown A.J."/>
            <person name="Brown J.Y."/>
            <person name="Burrill W."/>
            <person name="Carder C."/>
            <person name="Carter N.P."/>
            <person name="Chapman J.C."/>
            <person name="Clamp M.E."/>
            <person name="Clark S.Y."/>
            <person name="Clarke G."/>
            <person name="Clee C.M."/>
            <person name="Clegg S.C."/>
            <person name="Cobley V."/>
            <person name="Collins J.E."/>
            <person name="Corby N."/>
            <person name="Coville G.J."/>
            <person name="Deloukas P."/>
            <person name="Dhami P."/>
            <person name="Dunham I."/>
            <person name="Dunn M."/>
            <person name="Earthrowl M.E."/>
            <person name="Ellington A.G."/>
            <person name="Faulkner L."/>
            <person name="Frankish A.G."/>
            <person name="Frankland J."/>
            <person name="French L."/>
            <person name="Garner P."/>
            <person name="Garnett J."/>
            <person name="Gilbert J.G.R."/>
            <person name="Gilson C.J."/>
            <person name="Ghori J."/>
            <person name="Grafham D.V."/>
            <person name="Gribble S.M."/>
            <person name="Griffiths C."/>
            <person name="Hall R.E."/>
            <person name="Hammond S."/>
            <person name="Harley J.L."/>
            <person name="Hart E.A."/>
            <person name="Heath P.D."/>
            <person name="Howden P.J."/>
            <person name="Huckle E.J."/>
            <person name="Hunt P.J."/>
            <person name="Hunt A.R."/>
            <person name="Johnson C."/>
            <person name="Johnson D."/>
            <person name="Kay M."/>
            <person name="Kimberley A.M."/>
            <person name="King A."/>
            <person name="Laird G.K."/>
            <person name="Langford C.J."/>
            <person name="Lawlor S."/>
            <person name="Leongamornlert D.A."/>
            <person name="Lloyd D.M."/>
            <person name="Lloyd C."/>
            <person name="Loveland J.E."/>
            <person name="Lovell J."/>
            <person name="Martin S."/>
            <person name="Mashreghi-Mohammadi M."/>
            <person name="McLaren S.J."/>
            <person name="McMurray A."/>
            <person name="Milne S."/>
            <person name="Moore M.J.F."/>
            <person name="Nickerson T."/>
            <person name="Palmer S.A."/>
            <person name="Pearce A.V."/>
            <person name="Peck A.I."/>
            <person name="Pelan S."/>
            <person name="Phillimore B."/>
            <person name="Porter K.M."/>
            <person name="Rice C.M."/>
            <person name="Searle S."/>
            <person name="Sehra H.K."/>
            <person name="Shownkeen R."/>
            <person name="Skuce C.D."/>
            <person name="Smith M."/>
            <person name="Steward C.A."/>
            <person name="Sycamore N."/>
            <person name="Tester J."/>
            <person name="Thomas D.W."/>
            <person name="Tracey A."/>
            <person name="Tromans A."/>
            <person name="Tubby B."/>
            <person name="Wall M."/>
            <person name="Wallis J.M."/>
            <person name="West A.P."/>
            <person name="Whitehead S.L."/>
            <person name="Willey D.L."/>
            <person name="Wilming L."/>
            <person name="Wray P.W."/>
            <person name="Wright M.W."/>
            <person name="Young L."/>
            <person name="Coulson A."/>
            <person name="Durbin R.M."/>
            <person name="Hubbard T."/>
            <person name="Sulston J.E."/>
            <person name="Beck S."/>
            <person name="Bentley D.R."/>
            <person name="Rogers J."/>
            <person name="Ross M.T."/>
        </authorList>
    </citation>
    <scope>NUCLEOTIDE SEQUENCE [LARGE SCALE GENOMIC DNA]</scope>
</reference>
<reference key="2">
    <citation type="journal article" date="2004" name="Genome Res.">
        <title>The status, quality, and expansion of the NIH full-length cDNA project: the Mammalian Gene Collection (MGC).</title>
        <authorList>
            <consortium name="The MGC Project Team"/>
        </authorList>
    </citation>
    <scope>NUCLEOTIDE SEQUENCE [LARGE SCALE MRNA]</scope>
</reference>
<reference key="3">
    <citation type="journal article" date="2012" name="Nat. Commun.">
        <title>Lysine methylation of VCP by a member of a novel human protein methyltransferase family.</title>
        <authorList>
            <person name="Kernstock S."/>
            <person name="Davydova E."/>
            <person name="Jakobsson M."/>
            <person name="Moen A."/>
            <person name="Pettersen S."/>
            <person name="Maelandsmo G.M."/>
            <person name="Egge-Jacobsen W."/>
            <person name="Falnes P.O."/>
        </authorList>
    </citation>
    <scope>FUNCTION</scope>
    <scope>CATALYTIC ACTIVITY</scope>
    <scope>MUTAGENESIS OF ASP-141</scope>
</reference>
<reference key="4">
    <citation type="journal article" date="2013" name="PLoS Genet.">
        <title>A newly uncovered group of distantly related lysine methyltransferases preferentially interact with molecular chaperones to regulate their activity.</title>
        <authorList>
            <person name="Cloutier P."/>
            <person name="Lavallee-Adam M."/>
            <person name="Faubert D."/>
            <person name="Blanchette M."/>
            <person name="Coulombe B."/>
        </authorList>
    </citation>
    <scope>INTERACTION WITH HSP70 FAMILY MEMBERS</scope>
    <scope>SUBCELLULAR LOCATION</scope>
</reference>
<reference key="5">
    <citation type="journal article" date="2020" name="J. Biol. Chem.">
        <title>Methyltransferase-like 21C (METTL21C) methylates alanine tRNA synthetase at Lys-943 in muscle tissue.</title>
        <authorList>
            <person name="Zoabi M."/>
            <person name="Zhang L."/>
            <person name="Li T.M."/>
            <person name="Elias J.E."/>
            <person name="Carlson S.M."/>
            <person name="Gozani O."/>
        </authorList>
    </citation>
    <scope>FUNCTION</scope>
    <scope>CATALYTIC ACTIVITY</scope>
    <scope>SUBCELLULAR LOCATION</scope>
    <scope>MUTAGENESIS OF TRP-92 AND TYR-197</scope>
</reference>
<reference key="6">
    <citation type="submission" date="2013-09" db="PDB data bank">
        <title>Human methyltransferase-like protein 21C.</title>
        <authorList>
            <person name="Hong B.S."/>
            <person name="Tempel W."/>
            <person name="Dong A."/>
            <person name="Li Y."/>
            <person name="Arrowsmith C.H."/>
            <person name="Bountra C."/>
            <person name="Edwards A.M."/>
            <person name="Brown P.J."/>
        </authorList>
    </citation>
    <scope>X-RAY CRYSTALLOGRAPHY (1.65 ANGSTROMS) OF 22-264 IN COMPLEX WITH S-ADENOSYL-L-HOMOCYSTEINE</scope>
</reference>
<gene>
    <name evidence="9" type="primary">METTL21C</name>
    <name type="synonym">C13orf39</name>
</gene>
<name>MT21C_HUMAN</name>
<dbReference type="EC" id="2.1.1.-" evidence="3 5"/>
<dbReference type="EMBL" id="AL158063">
    <property type="status" value="NOT_ANNOTATED_CDS"/>
    <property type="molecule type" value="Genomic_DNA"/>
</dbReference>
<dbReference type="EMBL" id="BC132748">
    <property type="protein sequence ID" value="AAI32749.1"/>
    <property type="molecule type" value="mRNA"/>
</dbReference>
<dbReference type="EMBL" id="BC132750">
    <property type="protein sequence ID" value="AAI32751.1"/>
    <property type="molecule type" value="mRNA"/>
</dbReference>
<dbReference type="CCDS" id="CCDS32003.1"/>
<dbReference type="RefSeq" id="NP_001010977.1">
    <property type="nucleotide sequence ID" value="NM_001010977.3"/>
</dbReference>
<dbReference type="RefSeq" id="XP_016875896.1">
    <property type="nucleotide sequence ID" value="XM_017020407.1"/>
</dbReference>
<dbReference type="RefSeq" id="XP_016875897.1">
    <property type="nucleotide sequence ID" value="XM_017020408.1"/>
</dbReference>
<dbReference type="RefSeq" id="XP_047286073.1">
    <property type="nucleotide sequence ID" value="XM_047430117.1"/>
</dbReference>
<dbReference type="PDB" id="4MTL">
    <property type="method" value="X-ray"/>
    <property type="resolution" value="1.65 A"/>
    <property type="chains" value="A/B=22-264"/>
</dbReference>
<dbReference type="PDBsum" id="4MTL"/>
<dbReference type="SMR" id="Q5VZV1"/>
<dbReference type="BioGRID" id="128220">
    <property type="interactions" value="19"/>
</dbReference>
<dbReference type="FunCoup" id="Q5VZV1">
    <property type="interactions" value="9"/>
</dbReference>
<dbReference type="IntAct" id="Q5VZV1">
    <property type="interactions" value="4"/>
</dbReference>
<dbReference type="STRING" id="9606.ENSP00000267273"/>
<dbReference type="iPTMnet" id="Q5VZV1"/>
<dbReference type="PhosphoSitePlus" id="Q5VZV1"/>
<dbReference type="BioMuta" id="METTL21C"/>
<dbReference type="DMDM" id="74757117"/>
<dbReference type="MassIVE" id="Q5VZV1"/>
<dbReference type="PaxDb" id="9606-ENSP00000267273"/>
<dbReference type="PeptideAtlas" id="Q5VZV1"/>
<dbReference type="ProteomicsDB" id="65729"/>
<dbReference type="Antibodypedia" id="25326">
    <property type="antibodies" value="112 antibodies from 15 providers"/>
</dbReference>
<dbReference type="DNASU" id="196541"/>
<dbReference type="Ensembl" id="ENST00000267273.7">
    <property type="protein sequence ID" value="ENSP00000267273.5"/>
    <property type="gene ID" value="ENSG00000139780.8"/>
</dbReference>
<dbReference type="GeneID" id="196541"/>
<dbReference type="KEGG" id="hsa:196541"/>
<dbReference type="MANE-Select" id="ENST00000267273.7">
    <property type="protein sequence ID" value="ENSP00000267273.5"/>
    <property type="RefSeq nucleotide sequence ID" value="NM_001010977.3"/>
    <property type="RefSeq protein sequence ID" value="NP_001010977.1"/>
</dbReference>
<dbReference type="UCSC" id="uc001vpj.5">
    <property type="organism name" value="human"/>
</dbReference>
<dbReference type="AGR" id="HGNC:33717"/>
<dbReference type="CTD" id="196541"/>
<dbReference type="DisGeNET" id="196541"/>
<dbReference type="GeneCards" id="METTL21C"/>
<dbReference type="HGNC" id="HGNC:33717">
    <property type="gene designation" value="METTL21C"/>
</dbReference>
<dbReference type="HPA" id="ENSG00000139780">
    <property type="expression patterns" value="Tissue enriched (epididymis)"/>
</dbReference>
<dbReference type="MIM" id="615259">
    <property type="type" value="gene"/>
</dbReference>
<dbReference type="neXtProt" id="NX_Q5VZV1"/>
<dbReference type="OpenTargets" id="ENSG00000139780"/>
<dbReference type="PharmGKB" id="PA162378126"/>
<dbReference type="VEuPathDB" id="HostDB:ENSG00000139780"/>
<dbReference type="eggNOG" id="KOG2793">
    <property type="taxonomic scope" value="Eukaryota"/>
</dbReference>
<dbReference type="GeneTree" id="ENSGT00940000156596"/>
<dbReference type="HOGENOM" id="CLU_055721_0_0_1"/>
<dbReference type="InParanoid" id="Q5VZV1"/>
<dbReference type="OMA" id="QEHYLFA"/>
<dbReference type="OrthoDB" id="413520at2759"/>
<dbReference type="PAN-GO" id="Q5VZV1">
    <property type="GO annotations" value="4 GO annotations based on evolutionary models"/>
</dbReference>
<dbReference type="PhylomeDB" id="Q5VZV1"/>
<dbReference type="TreeFam" id="TF354267"/>
<dbReference type="PathwayCommons" id="Q5VZV1"/>
<dbReference type="SignaLink" id="Q5VZV1"/>
<dbReference type="SIGNOR" id="Q5VZV1"/>
<dbReference type="BioGRID-ORCS" id="196541">
    <property type="hits" value="8 hits in 1135 CRISPR screens"/>
</dbReference>
<dbReference type="ChiTaRS" id="METTL21C">
    <property type="organism name" value="human"/>
</dbReference>
<dbReference type="EvolutionaryTrace" id="Q5VZV1"/>
<dbReference type="GenomeRNAi" id="196541"/>
<dbReference type="Pharos" id="Q5VZV1">
    <property type="development level" value="Tbio"/>
</dbReference>
<dbReference type="PRO" id="PR:Q5VZV1"/>
<dbReference type="Proteomes" id="UP000005640">
    <property type="component" value="Chromosome 13"/>
</dbReference>
<dbReference type="RNAct" id="Q5VZV1">
    <property type="molecule type" value="protein"/>
</dbReference>
<dbReference type="Bgee" id="ENSG00000139780">
    <property type="expression patterns" value="Expressed in primordial germ cell in gonad and 46 other cell types or tissues"/>
</dbReference>
<dbReference type="GO" id="GO:0005737">
    <property type="term" value="C:cytoplasm"/>
    <property type="evidence" value="ECO:0000314"/>
    <property type="project" value="UniProtKB"/>
</dbReference>
<dbReference type="GO" id="GO:0005634">
    <property type="term" value="C:nucleus"/>
    <property type="evidence" value="ECO:0000314"/>
    <property type="project" value="UniProtKB"/>
</dbReference>
<dbReference type="GO" id="GO:0032991">
    <property type="term" value="C:protein-containing complex"/>
    <property type="evidence" value="ECO:0000314"/>
    <property type="project" value="UniProtKB"/>
</dbReference>
<dbReference type="GO" id="GO:0031072">
    <property type="term" value="F:heat shock protein binding"/>
    <property type="evidence" value="ECO:0000353"/>
    <property type="project" value="UniProtKB"/>
</dbReference>
<dbReference type="GO" id="GO:0008276">
    <property type="term" value="F:protein methyltransferase activity"/>
    <property type="evidence" value="ECO:0000318"/>
    <property type="project" value="GO_Central"/>
</dbReference>
<dbReference type="GO" id="GO:0016279">
    <property type="term" value="F:protein-lysine N-methyltransferase activity"/>
    <property type="evidence" value="ECO:0000314"/>
    <property type="project" value="UniProtKB"/>
</dbReference>
<dbReference type="GO" id="GO:0071549">
    <property type="term" value="P:cellular response to dexamethasone stimulus"/>
    <property type="evidence" value="ECO:0007669"/>
    <property type="project" value="Ensembl"/>
</dbReference>
<dbReference type="GO" id="GO:0008628">
    <property type="term" value="P:hormone-mediated apoptotic signaling pathway"/>
    <property type="evidence" value="ECO:0007669"/>
    <property type="project" value="Ensembl"/>
</dbReference>
<dbReference type="GO" id="GO:0018022">
    <property type="term" value="P:peptidyl-lysine methylation"/>
    <property type="evidence" value="ECO:0000314"/>
    <property type="project" value="UniProtKB"/>
</dbReference>
<dbReference type="GO" id="GO:0006479">
    <property type="term" value="P:protein methylation"/>
    <property type="evidence" value="ECO:0000314"/>
    <property type="project" value="UniProtKB"/>
</dbReference>
<dbReference type="GO" id="GO:0010880">
    <property type="term" value="P:regulation of release of sequestered calcium ion into cytosol by sarcoplasmic reticulum"/>
    <property type="evidence" value="ECO:0007669"/>
    <property type="project" value="Ensembl"/>
</dbReference>
<dbReference type="GO" id="GO:0007519">
    <property type="term" value="P:skeletal muscle tissue development"/>
    <property type="evidence" value="ECO:0007669"/>
    <property type="project" value="Ensembl"/>
</dbReference>
<dbReference type="CDD" id="cd02440">
    <property type="entry name" value="AdoMet_MTases"/>
    <property type="match status" value="1"/>
</dbReference>
<dbReference type="FunFam" id="3.40.50.150:FF:000188">
    <property type="entry name" value="Protein-lysine methyltransferase METTL21C"/>
    <property type="match status" value="1"/>
</dbReference>
<dbReference type="Gene3D" id="3.40.50.150">
    <property type="entry name" value="Vaccinia Virus protein VP39"/>
    <property type="match status" value="1"/>
</dbReference>
<dbReference type="InterPro" id="IPR019410">
    <property type="entry name" value="Methyltransf_16"/>
</dbReference>
<dbReference type="InterPro" id="IPR029063">
    <property type="entry name" value="SAM-dependent_MTases_sf"/>
</dbReference>
<dbReference type="PANTHER" id="PTHR14614">
    <property type="entry name" value="HEPATOCELLULAR CARCINOMA-ASSOCIATED ANTIGEN"/>
    <property type="match status" value="1"/>
</dbReference>
<dbReference type="PANTHER" id="PTHR14614:SF13">
    <property type="entry name" value="PROTEIN-LYSINE METHYLTRANSFERASE METTL21C"/>
    <property type="match status" value="1"/>
</dbReference>
<dbReference type="Pfam" id="PF10294">
    <property type="entry name" value="Methyltransf_16"/>
    <property type="match status" value="1"/>
</dbReference>
<dbReference type="SUPFAM" id="SSF53335">
    <property type="entry name" value="S-adenosyl-L-methionine-dependent methyltransferases"/>
    <property type="match status" value="1"/>
</dbReference>
<proteinExistence type="evidence at protein level"/>
<comment type="function">
    <text evidence="3 5">Protein-lysine N-methyltransferase using S-adenosyl-L-methionine as methyl donor (PubMed:22948820, PubMed:32611769). Mono-di and trimethylates 'Lys-943' of AARS1 (PubMed:32611769).</text>
</comment>
<comment type="catalytic activity">
    <reaction evidence="5">
        <text>L-lysyl-[protein] + S-adenosyl-L-methionine = N(6)-methyl-L-lysyl-[protein] + S-adenosyl-L-homocysteine + H(+)</text>
        <dbReference type="Rhea" id="RHEA:51736"/>
        <dbReference type="Rhea" id="RHEA-COMP:9752"/>
        <dbReference type="Rhea" id="RHEA-COMP:13053"/>
        <dbReference type="ChEBI" id="CHEBI:15378"/>
        <dbReference type="ChEBI" id="CHEBI:29969"/>
        <dbReference type="ChEBI" id="CHEBI:57856"/>
        <dbReference type="ChEBI" id="CHEBI:59789"/>
        <dbReference type="ChEBI" id="CHEBI:61929"/>
    </reaction>
    <physiologicalReaction direction="left-to-right" evidence="8">
        <dbReference type="Rhea" id="RHEA:51737"/>
    </physiologicalReaction>
</comment>
<comment type="catalytic activity">
    <reaction evidence="5">
        <text>N(6)-methyl-L-lysyl-[protein] + S-adenosyl-L-methionine = N(6),N(6)-dimethyl-L-lysyl-[protein] + S-adenosyl-L-homocysteine + H(+)</text>
        <dbReference type="Rhea" id="RHEA:54196"/>
        <dbReference type="Rhea" id="RHEA-COMP:13053"/>
        <dbReference type="Rhea" id="RHEA-COMP:13827"/>
        <dbReference type="ChEBI" id="CHEBI:15378"/>
        <dbReference type="ChEBI" id="CHEBI:57856"/>
        <dbReference type="ChEBI" id="CHEBI:59789"/>
        <dbReference type="ChEBI" id="CHEBI:61929"/>
        <dbReference type="ChEBI" id="CHEBI:61976"/>
    </reaction>
    <physiologicalReaction direction="left-to-right" evidence="8">
        <dbReference type="Rhea" id="RHEA:54197"/>
    </physiologicalReaction>
</comment>
<comment type="catalytic activity">
    <reaction evidence="5">
        <text>N(6),N(6)-dimethyl-L-lysyl-[protein] + S-adenosyl-L-methionine = N(6),N(6),N(6)-trimethyl-L-lysyl-[protein] + S-adenosyl-L-homocysteine + H(+)</text>
        <dbReference type="Rhea" id="RHEA:54200"/>
        <dbReference type="Rhea" id="RHEA-COMP:13826"/>
        <dbReference type="Rhea" id="RHEA-COMP:13827"/>
        <dbReference type="ChEBI" id="CHEBI:15378"/>
        <dbReference type="ChEBI" id="CHEBI:57856"/>
        <dbReference type="ChEBI" id="CHEBI:59789"/>
        <dbReference type="ChEBI" id="CHEBI:61961"/>
        <dbReference type="ChEBI" id="CHEBI:61976"/>
    </reaction>
</comment>
<comment type="subunit">
    <text evidence="4">Interacts with members of the heat shock protein 70 families; these proteins may possibly be methylation substrates for the enzyme.</text>
</comment>
<comment type="interaction">
    <interactant intactId="EBI-10236049">
        <id>Q5VZV1</id>
    </interactant>
    <interactant intactId="EBI-1046765">
        <id>O14874</id>
        <label>BCKDK</label>
    </interactant>
    <organismsDiffer>false</organismsDiffer>
    <experiments>3</experiments>
</comment>
<comment type="interaction">
    <interactant intactId="EBI-10236049">
        <id>Q5VZV1</id>
    </interactant>
    <interactant intactId="EBI-301231">
        <id>Q15369</id>
        <label>ELOC</label>
    </interactant>
    <organismsDiffer>false</organismsDiffer>
    <experiments>9</experiments>
</comment>
<comment type="subcellular location">
    <subcellularLocation>
        <location evidence="4">Nucleus</location>
    </subcellularLocation>
    <subcellularLocation>
        <location evidence="5">Cytoplasm</location>
    </subcellularLocation>
</comment>
<comment type="similarity">
    <text evidence="7">Belongs to the methyltransferase superfamily. METTL21 family.</text>
</comment>
<comment type="caution">
    <text evidence="1 5">Contradictory results have been reported with regards to its ability to methylate HSPA8 and VCP. One study found that METTL21C methylated HSPA8, whereas one other reported methylation of VCP, but the experimental evidence was in both cases rather limited (By similarity). Indeed, a subsequent, third study fails to observe in vitro activity of METTL21C on either HSPA8 or VCP (PubMed:32611769).</text>
</comment>
<sequence length="264" mass="29565">MDVCLSSAQQPGRRGEGLSSPGGWLEAEKKGAPQKDSTGGVLEESNKIEPSLHSLQKFVPTDYASYTQEHYRFAGKEIVIQESIESYGAVVWPGAMALCQYLEEHAEELNFQDAKILEIGAGPGLVSIVASILGAQVTATDLPDVLGNLQYNLLKNTLQCTAHLPEVKELVWGEDLDKNFPKSAFYYDYVLASDVVYHHYFLDKLLTTMVYLSQPGTVLLWANKFRFSTDYEFLDKFKQVFDTTLLAEYPESSVKLFKGILKWD</sequence>
<accession>Q5VZV1</accession>
<keyword id="KW-0002">3D-structure</keyword>
<keyword id="KW-0963">Cytoplasm</keyword>
<keyword id="KW-0489">Methyltransferase</keyword>
<keyword id="KW-0539">Nucleus</keyword>
<keyword id="KW-1267">Proteomics identification</keyword>
<keyword id="KW-1185">Reference proteome</keyword>
<keyword id="KW-0949">S-adenosyl-L-methionine</keyword>
<keyword id="KW-0808">Transferase</keyword>
<organism>
    <name type="scientific">Homo sapiens</name>
    <name type="common">Human</name>
    <dbReference type="NCBI Taxonomy" id="9606"/>
    <lineage>
        <taxon>Eukaryota</taxon>
        <taxon>Metazoa</taxon>
        <taxon>Chordata</taxon>
        <taxon>Craniata</taxon>
        <taxon>Vertebrata</taxon>
        <taxon>Euteleostomi</taxon>
        <taxon>Mammalia</taxon>
        <taxon>Eutheria</taxon>
        <taxon>Euarchontoglires</taxon>
        <taxon>Primates</taxon>
        <taxon>Haplorrhini</taxon>
        <taxon>Catarrhini</taxon>
        <taxon>Hominidae</taxon>
        <taxon>Homo</taxon>
    </lineage>
</organism>
<protein>
    <recommendedName>
        <fullName>Protein-lysine methyltransferase METTL21C</fullName>
        <ecNumber evidence="3 5">2.1.1.-</ecNumber>
    </recommendedName>
    <alternativeName>
        <fullName>Methyltransferase-like protein 21C</fullName>
    </alternativeName>
</protein>
<evidence type="ECO:0000250" key="1">
    <source>
        <dbReference type="UniProtKB" id="Q8BLU2"/>
    </source>
</evidence>
<evidence type="ECO:0000256" key="2">
    <source>
        <dbReference type="SAM" id="MobiDB-lite"/>
    </source>
</evidence>
<evidence type="ECO:0000269" key="3">
    <source>
    </source>
</evidence>
<evidence type="ECO:0000269" key="4">
    <source>
    </source>
</evidence>
<evidence type="ECO:0000269" key="5">
    <source>
    </source>
</evidence>
<evidence type="ECO:0000269" key="6">
    <source ref="6"/>
</evidence>
<evidence type="ECO:0000305" key="7"/>
<evidence type="ECO:0000305" key="8">
    <source>
    </source>
</evidence>
<evidence type="ECO:0000312" key="9">
    <source>
        <dbReference type="HGNC" id="HGNC:33717"/>
    </source>
</evidence>
<evidence type="ECO:0007744" key="10">
    <source>
        <dbReference type="PDB" id="4MTL"/>
    </source>
</evidence>
<evidence type="ECO:0007829" key="11">
    <source>
        <dbReference type="PDB" id="4MTL"/>
    </source>
</evidence>
<feature type="chain" id="PRO_0000319590" description="Protein-lysine methyltransferase METTL21C">
    <location>
        <begin position="1"/>
        <end position="264"/>
    </location>
</feature>
<feature type="region of interest" description="Disordered" evidence="2">
    <location>
        <begin position="1"/>
        <end position="46"/>
    </location>
</feature>
<feature type="compositionally biased region" description="Polar residues" evidence="2">
    <location>
        <begin position="1"/>
        <end position="10"/>
    </location>
</feature>
<feature type="binding site" evidence="6 10">
    <location>
        <position position="92"/>
    </location>
    <ligand>
        <name>S-adenosyl-L-methionine</name>
        <dbReference type="ChEBI" id="CHEBI:59789"/>
    </ligand>
</feature>
<feature type="binding site" evidence="6 10">
    <location>
        <begin position="120"/>
        <end position="122"/>
    </location>
    <ligand>
        <name>S-adenosyl-L-methionine</name>
        <dbReference type="ChEBI" id="CHEBI:59789"/>
    </ligand>
</feature>
<feature type="binding site" evidence="6 10">
    <location>
        <position position="141"/>
    </location>
    <ligand>
        <name>S-adenosyl-L-methionine</name>
        <dbReference type="ChEBI" id="CHEBI:59789"/>
    </ligand>
</feature>
<feature type="binding site" evidence="6 10">
    <location>
        <position position="172"/>
    </location>
    <ligand>
        <name>S-adenosyl-L-methionine</name>
        <dbReference type="ChEBI" id="CHEBI:59789"/>
    </ligand>
</feature>
<feature type="binding site" evidence="6 10">
    <location>
        <position position="193"/>
    </location>
    <ligand>
        <name>S-adenosyl-L-methionine</name>
        <dbReference type="ChEBI" id="CHEBI:59789"/>
    </ligand>
</feature>
<feature type="sequence variant" id="VAR_062229" description="In dbSNP:rs2390760.">
    <original>G</original>
    <variation>R</variation>
    <location>
        <position position="15"/>
    </location>
</feature>
<feature type="sequence variant" id="VAR_039013" description="In dbSNP:rs16960383.">
    <original>N</original>
    <variation>S</variation>
    <location>
        <position position="46"/>
    </location>
</feature>
<feature type="mutagenesis site" description="Abolishes methyltransferase activity; when associated with A-197." evidence="5">
    <original>W</original>
    <variation>A</variation>
    <location>
        <position position="92"/>
    </location>
</feature>
<feature type="mutagenesis site" description="Abolishes methyltransferase activity." evidence="3">
    <original>D</original>
    <variation>A</variation>
    <location>
        <position position="141"/>
    </location>
</feature>
<feature type="mutagenesis site" description="Abolishes methyltransferase activity; when associated with A-92." evidence="5">
    <original>Y</original>
    <variation>A</variation>
    <location>
        <position position="197"/>
    </location>
</feature>
<feature type="helix" evidence="11">
    <location>
        <begin position="52"/>
        <end position="56"/>
    </location>
</feature>
<feature type="strand" evidence="11">
    <location>
        <begin position="67"/>
        <end position="73"/>
    </location>
</feature>
<feature type="strand" evidence="11">
    <location>
        <begin position="76"/>
        <end position="82"/>
    </location>
</feature>
<feature type="helix" evidence="11">
    <location>
        <begin position="87"/>
        <end position="89"/>
    </location>
</feature>
<feature type="helix" evidence="11">
    <location>
        <begin position="93"/>
        <end position="109"/>
    </location>
</feature>
<feature type="strand" evidence="11">
    <location>
        <begin position="115"/>
        <end position="120"/>
    </location>
</feature>
<feature type="helix" evidence="11">
    <location>
        <begin position="125"/>
        <end position="132"/>
    </location>
</feature>
<feature type="strand" evidence="11">
    <location>
        <begin position="136"/>
        <end position="141"/>
    </location>
</feature>
<feature type="turn" evidence="11">
    <location>
        <begin position="143"/>
        <end position="145"/>
    </location>
</feature>
<feature type="helix" evidence="11">
    <location>
        <begin position="146"/>
        <end position="157"/>
    </location>
</feature>
<feature type="turn" evidence="11">
    <location>
        <begin position="158"/>
        <end position="160"/>
    </location>
</feature>
<feature type="strand" evidence="11">
    <location>
        <begin position="161"/>
        <end position="163"/>
    </location>
</feature>
<feature type="strand" evidence="11">
    <location>
        <begin position="166"/>
        <end position="169"/>
    </location>
</feature>
<feature type="helix" evidence="11">
    <location>
        <begin position="176"/>
        <end position="179"/>
    </location>
</feature>
<feature type="turn" evidence="11">
    <location>
        <begin position="182"/>
        <end position="184"/>
    </location>
</feature>
<feature type="strand" evidence="11">
    <location>
        <begin position="188"/>
        <end position="194"/>
    </location>
</feature>
<feature type="strand" evidence="11">
    <location>
        <begin position="197"/>
        <end position="199"/>
    </location>
</feature>
<feature type="helix" evidence="11">
    <location>
        <begin position="202"/>
        <end position="212"/>
    </location>
</feature>
<feature type="strand" evidence="11">
    <location>
        <begin position="218"/>
        <end position="224"/>
    </location>
</feature>
<feature type="helix" evidence="11">
    <location>
        <begin position="228"/>
        <end position="240"/>
    </location>
</feature>
<feature type="strand" evidence="11">
    <location>
        <begin position="241"/>
        <end position="249"/>
    </location>
</feature>
<feature type="turn" evidence="11">
    <location>
        <begin position="250"/>
        <end position="253"/>
    </location>
</feature>
<feature type="strand" evidence="11">
    <location>
        <begin position="254"/>
        <end position="261"/>
    </location>
</feature>